<keyword id="KW-0067">ATP-binding</keyword>
<keyword id="KW-0436">Ligase</keyword>
<keyword id="KW-0547">Nucleotide-binding</keyword>
<keyword id="KW-0648">Protein biosynthesis</keyword>
<keyword id="KW-1185">Reference proteome</keyword>
<accession>Q8Y3C6</accession>
<comment type="function">
    <text evidence="1">Allows the formation of correctly charged Asn-tRNA(Asn) or Gln-tRNA(Gln) through the transamidation of misacylated Asp-tRNA(Asn) or Glu-tRNA(Gln) in organisms which lack either or both of asparaginyl-tRNA or glutaminyl-tRNA synthetases. The reaction takes place in the presence of glutamine and ATP through an activated phospho-Asp-tRNA(Asn) or phospho-Glu-tRNA(Gln).</text>
</comment>
<comment type="catalytic activity">
    <reaction evidence="1">
        <text>L-glutamyl-tRNA(Gln) + L-glutamine + ATP + H2O = L-glutaminyl-tRNA(Gln) + L-glutamate + ADP + phosphate + H(+)</text>
        <dbReference type="Rhea" id="RHEA:17521"/>
        <dbReference type="Rhea" id="RHEA-COMP:9681"/>
        <dbReference type="Rhea" id="RHEA-COMP:9684"/>
        <dbReference type="ChEBI" id="CHEBI:15377"/>
        <dbReference type="ChEBI" id="CHEBI:15378"/>
        <dbReference type="ChEBI" id="CHEBI:29985"/>
        <dbReference type="ChEBI" id="CHEBI:30616"/>
        <dbReference type="ChEBI" id="CHEBI:43474"/>
        <dbReference type="ChEBI" id="CHEBI:58359"/>
        <dbReference type="ChEBI" id="CHEBI:78520"/>
        <dbReference type="ChEBI" id="CHEBI:78521"/>
        <dbReference type="ChEBI" id="CHEBI:456216"/>
    </reaction>
</comment>
<comment type="catalytic activity">
    <reaction evidence="1">
        <text>L-aspartyl-tRNA(Asn) + L-glutamine + ATP + H2O = L-asparaginyl-tRNA(Asn) + L-glutamate + ADP + phosphate + 2 H(+)</text>
        <dbReference type="Rhea" id="RHEA:14513"/>
        <dbReference type="Rhea" id="RHEA-COMP:9674"/>
        <dbReference type="Rhea" id="RHEA-COMP:9677"/>
        <dbReference type="ChEBI" id="CHEBI:15377"/>
        <dbReference type="ChEBI" id="CHEBI:15378"/>
        <dbReference type="ChEBI" id="CHEBI:29985"/>
        <dbReference type="ChEBI" id="CHEBI:30616"/>
        <dbReference type="ChEBI" id="CHEBI:43474"/>
        <dbReference type="ChEBI" id="CHEBI:58359"/>
        <dbReference type="ChEBI" id="CHEBI:78515"/>
        <dbReference type="ChEBI" id="CHEBI:78516"/>
        <dbReference type="ChEBI" id="CHEBI:456216"/>
    </reaction>
</comment>
<comment type="subunit">
    <text evidence="1">Heterotrimer of A, B and C subunits.</text>
</comment>
<comment type="similarity">
    <text evidence="1">Belongs to the GatB/GatE family. GatB subfamily.</text>
</comment>
<sequence length="488" mass="52342">MQWEVVIGLETHAQLSTASKIFSGASTAFGAAPNTQAAPVDLALPGVLPVLNKGAVERAITFGLAIGAKIASKSIFARKNYFYPDLPKGYQISQYEIPVVQGGTLTIQVEGRNGQPGYEKTVNLTRAHLEEDAGKSLHEDFAGMTGIDLNRAGTPLLEIVTEPDMRSAAEAVAYARALHALVMWLGICDGNMQEGSFRCDANVSVRRGPDAPFGTRCEIKNLNSFRFLEEAINYEVRRQIELIEDGGTVVQETRLYDPDRKETRSMRSKEDAHDYRYFPDPDLLPLMIGADWVDAVRATLPELPAAMAARFESAYGLPRYDASILTATKATAAYFEAVVAAAGAANAKAAANWIMGEVASNLNRAGLEIDAAPVSPVQLAGLLARIADGTISNNTAKKDVFPAMWAGEHGGDADAIIAEKGLKQMSDSGELEKIIDEVLAANAKSVEEFRAGKDKAFNALVGQAMKATRGKANPSQVNELLKKKLGAA</sequence>
<evidence type="ECO:0000255" key="1">
    <source>
        <dbReference type="HAMAP-Rule" id="MF_00121"/>
    </source>
</evidence>
<dbReference type="EC" id="6.3.5.-" evidence="1"/>
<dbReference type="EMBL" id="AL646052">
    <property type="protein sequence ID" value="CAD13582.1"/>
    <property type="molecule type" value="Genomic_DNA"/>
</dbReference>
<dbReference type="RefSeq" id="WP_011000021.1">
    <property type="nucleotide sequence ID" value="NC_003295.1"/>
</dbReference>
<dbReference type="SMR" id="Q8Y3C6"/>
<dbReference type="STRING" id="267608.RSc0054"/>
<dbReference type="EnsemblBacteria" id="CAD13582">
    <property type="protein sequence ID" value="CAD13582"/>
    <property type="gene ID" value="RSc0054"/>
</dbReference>
<dbReference type="KEGG" id="rso:RSc0054"/>
<dbReference type="PATRIC" id="fig|267608.8.peg.57"/>
<dbReference type="eggNOG" id="COG0064">
    <property type="taxonomic scope" value="Bacteria"/>
</dbReference>
<dbReference type="HOGENOM" id="CLU_019240_0_0_4"/>
<dbReference type="Proteomes" id="UP000001436">
    <property type="component" value="Chromosome"/>
</dbReference>
<dbReference type="GO" id="GO:0050566">
    <property type="term" value="F:asparaginyl-tRNA synthase (glutamine-hydrolyzing) activity"/>
    <property type="evidence" value="ECO:0007669"/>
    <property type="project" value="RHEA"/>
</dbReference>
<dbReference type="GO" id="GO:0005524">
    <property type="term" value="F:ATP binding"/>
    <property type="evidence" value="ECO:0007669"/>
    <property type="project" value="UniProtKB-KW"/>
</dbReference>
<dbReference type="GO" id="GO:0050567">
    <property type="term" value="F:glutaminyl-tRNA synthase (glutamine-hydrolyzing) activity"/>
    <property type="evidence" value="ECO:0007669"/>
    <property type="project" value="UniProtKB-UniRule"/>
</dbReference>
<dbReference type="GO" id="GO:0070681">
    <property type="term" value="P:glutaminyl-tRNAGln biosynthesis via transamidation"/>
    <property type="evidence" value="ECO:0007669"/>
    <property type="project" value="TreeGrafter"/>
</dbReference>
<dbReference type="GO" id="GO:0006412">
    <property type="term" value="P:translation"/>
    <property type="evidence" value="ECO:0007669"/>
    <property type="project" value="UniProtKB-UniRule"/>
</dbReference>
<dbReference type="FunFam" id="1.10.10.410:FF:000001">
    <property type="entry name" value="Aspartyl/glutamyl-tRNA(Asn/Gln) amidotransferase subunit B"/>
    <property type="match status" value="1"/>
</dbReference>
<dbReference type="FunFam" id="1.10.150.380:FF:000001">
    <property type="entry name" value="Aspartyl/glutamyl-tRNA(Asn/Gln) amidotransferase subunit B"/>
    <property type="match status" value="1"/>
</dbReference>
<dbReference type="Gene3D" id="1.10.10.410">
    <property type="match status" value="1"/>
</dbReference>
<dbReference type="Gene3D" id="1.10.150.380">
    <property type="entry name" value="GatB domain, N-terminal subdomain"/>
    <property type="match status" value="1"/>
</dbReference>
<dbReference type="HAMAP" id="MF_00121">
    <property type="entry name" value="GatB"/>
    <property type="match status" value="1"/>
</dbReference>
<dbReference type="InterPro" id="IPR017959">
    <property type="entry name" value="Asn/Gln-tRNA_amidoTrfase_suB/E"/>
</dbReference>
<dbReference type="InterPro" id="IPR006075">
    <property type="entry name" value="Asn/Gln-tRNA_Trfase_suB/E_cat"/>
</dbReference>
<dbReference type="InterPro" id="IPR018027">
    <property type="entry name" value="Asn/Gln_amidotransferase"/>
</dbReference>
<dbReference type="InterPro" id="IPR003789">
    <property type="entry name" value="Asn/Gln_tRNA_amidoTrase-B-like"/>
</dbReference>
<dbReference type="InterPro" id="IPR004413">
    <property type="entry name" value="GatB"/>
</dbReference>
<dbReference type="InterPro" id="IPR042114">
    <property type="entry name" value="GatB_C_1"/>
</dbReference>
<dbReference type="InterPro" id="IPR023168">
    <property type="entry name" value="GatB_Yqey_C_2"/>
</dbReference>
<dbReference type="InterPro" id="IPR017958">
    <property type="entry name" value="Gln-tRNA_amidoTrfase_suB_CS"/>
</dbReference>
<dbReference type="InterPro" id="IPR014746">
    <property type="entry name" value="Gln_synth/guanido_kin_cat_dom"/>
</dbReference>
<dbReference type="NCBIfam" id="TIGR00133">
    <property type="entry name" value="gatB"/>
    <property type="match status" value="1"/>
</dbReference>
<dbReference type="NCBIfam" id="NF004012">
    <property type="entry name" value="PRK05477.1-2"/>
    <property type="match status" value="1"/>
</dbReference>
<dbReference type="NCBIfam" id="NF004014">
    <property type="entry name" value="PRK05477.1-4"/>
    <property type="match status" value="1"/>
</dbReference>
<dbReference type="NCBIfam" id="NF004015">
    <property type="entry name" value="PRK05477.1-5"/>
    <property type="match status" value="1"/>
</dbReference>
<dbReference type="PANTHER" id="PTHR11659">
    <property type="entry name" value="GLUTAMYL-TRNA GLN AMIDOTRANSFERASE SUBUNIT B MITOCHONDRIAL AND PROKARYOTIC PET112-RELATED"/>
    <property type="match status" value="1"/>
</dbReference>
<dbReference type="PANTHER" id="PTHR11659:SF0">
    <property type="entry name" value="GLUTAMYL-TRNA(GLN) AMIDOTRANSFERASE SUBUNIT B, MITOCHONDRIAL"/>
    <property type="match status" value="1"/>
</dbReference>
<dbReference type="Pfam" id="PF02934">
    <property type="entry name" value="GatB_N"/>
    <property type="match status" value="1"/>
</dbReference>
<dbReference type="Pfam" id="PF02637">
    <property type="entry name" value="GatB_Yqey"/>
    <property type="match status" value="1"/>
</dbReference>
<dbReference type="SMART" id="SM00845">
    <property type="entry name" value="GatB_Yqey"/>
    <property type="match status" value="1"/>
</dbReference>
<dbReference type="SUPFAM" id="SSF89095">
    <property type="entry name" value="GatB/YqeY motif"/>
    <property type="match status" value="1"/>
</dbReference>
<dbReference type="SUPFAM" id="SSF55931">
    <property type="entry name" value="Glutamine synthetase/guanido kinase"/>
    <property type="match status" value="1"/>
</dbReference>
<dbReference type="PROSITE" id="PS01234">
    <property type="entry name" value="GATB"/>
    <property type="match status" value="1"/>
</dbReference>
<proteinExistence type="inferred from homology"/>
<reference key="1">
    <citation type="journal article" date="2002" name="Nature">
        <title>Genome sequence of the plant pathogen Ralstonia solanacearum.</title>
        <authorList>
            <person name="Salanoubat M."/>
            <person name="Genin S."/>
            <person name="Artiguenave F."/>
            <person name="Gouzy J."/>
            <person name="Mangenot S."/>
            <person name="Arlat M."/>
            <person name="Billault A."/>
            <person name="Brottier P."/>
            <person name="Camus J.-C."/>
            <person name="Cattolico L."/>
            <person name="Chandler M."/>
            <person name="Choisne N."/>
            <person name="Claudel-Renard C."/>
            <person name="Cunnac S."/>
            <person name="Demange N."/>
            <person name="Gaspin C."/>
            <person name="Lavie M."/>
            <person name="Moisan A."/>
            <person name="Robert C."/>
            <person name="Saurin W."/>
            <person name="Schiex T."/>
            <person name="Siguier P."/>
            <person name="Thebault P."/>
            <person name="Whalen M."/>
            <person name="Wincker P."/>
            <person name="Levy M."/>
            <person name="Weissenbach J."/>
            <person name="Boucher C.A."/>
        </authorList>
    </citation>
    <scope>NUCLEOTIDE SEQUENCE [LARGE SCALE GENOMIC DNA]</scope>
    <source>
        <strain>ATCC BAA-1114 / GMI1000</strain>
    </source>
</reference>
<name>GATB_RALN1</name>
<feature type="chain" id="PRO_0000148826" description="Aspartyl/glutamyl-tRNA(Asn/Gln) amidotransferase subunit B">
    <location>
        <begin position="1"/>
        <end position="488"/>
    </location>
</feature>
<protein>
    <recommendedName>
        <fullName evidence="1">Aspartyl/glutamyl-tRNA(Asn/Gln) amidotransferase subunit B</fullName>
        <shortName evidence="1">Asp/Glu-ADT subunit B</shortName>
        <ecNumber evidence="1">6.3.5.-</ecNumber>
    </recommendedName>
</protein>
<gene>
    <name evidence="1" type="primary">gatB</name>
    <name type="ordered locus">RSc0054</name>
    <name type="ORF">RS01877</name>
</gene>
<organism>
    <name type="scientific">Ralstonia nicotianae (strain ATCC BAA-1114 / GMI1000)</name>
    <name type="common">Ralstonia solanacearum</name>
    <dbReference type="NCBI Taxonomy" id="267608"/>
    <lineage>
        <taxon>Bacteria</taxon>
        <taxon>Pseudomonadati</taxon>
        <taxon>Pseudomonadota</taxon>
        <taxon>Betaproteobacteria</taxon>
        <taxon>Burkholderiales</taxon>
        <taxon>Burkholderiaceae</taxon>
        <taxon>Ralstonia</taxon>
        <taxon>Ralstonia solanacearum species complex</taxon>
    </lineage>
</organism>